<evidence type="ECO:0000255" key="1">
    <source>
        <dbReference type="HAMAP-Rule" id="MF_01337"/>
    </source>
</evidence>
<evidence type="ECO:0000305" key="2"/>
<feature type="chain" id="PRO_1000053094" description="Large ribosomal subunit protein uL18">
    <location>
        <begin position="1"/>
        <end position="119"/>
    </location>
</feature>
<gene>
    <name evidence="1" type="primary">rplR</name>
    <name type="ordered locus">H16_A3468</name>
</gene>
<keyword id="KW-1185">Reference proteome</keyword>
<keyword id="KW-0687">Ribonucleoprotein</keyword>
<keyword id="KW-0689">Ribosomal protein</keyword>
<keyword id="KW-0694">RNA-binding</keyword>
<keyword id="KW-0699">rRNA-binding</keyword>
<comment type="function">
    <text evidence="1">This is one of the proteins that bind and probably mediate the attachment of the 5S RNA into the large ribosomal subunit, where it forms part of the central protuberance.</text>
</comment>
<comment type="subunit">
    <text evidence="1">Part of the 50S ribosomal subunit; part of the 5S rRNA/L5/L18/L25 subcomplex. Contacts the 5S and 23S rRNAs.</text>
</comment>
<comment type="similarity">
    <text evidence="1">Belongs to the universal ribosomal protein uL18 family.</text>
</comment>
<proteinExistence type="inferred from homology"/>
<organism>
    <name type="scientific">Cupriavidus necator (strain ATCC 17699 / DSM 428 / KCTC 22496 / NCIMB 10442 / H16 / Stanier 337)</name>
    <name type="common">Ralstonia eutropha</name>
    <dbReference type="NCBI Taxonomy" id="381666"/>
    <lineage>
        <taxon>Bacteria</taxon>
        <taxon>Pseudomonadati</taxon>
        <taxon>Pseudomonadota</taxon>
        <taxon>Betaproteobacteria</taxon>
        <taxon>Burkholderiales</taxon>
        <taxon>Burkholderiaceae</taxon>
        <taxon>Cupriavidus</taxon>
    </lineage>
</organism>
<sequence length="119" mass="12924">MMNKKDARLRRARQTRAKIAEMKVNRLTVFRTNSHIYAQVFSECGTKVLASASTAEVEVRKELDGKGATAAAATVVGKRIAEKAKAAGVETVAFDRAGFRFHGRVKALADAAREAGLKF</sequence>
<reference key="1">
    <citation type="journal article" date="2006" name="Nat. Biotechnol.">
        <title>Genome sequence of the bioplastic-producing 'Knallgas' bacterium Ralstonia eutropha H16.</title>
        <authorList>
            <person name="Pohlmann A."/>
            <person name="Fricke W.F."/>
            <person name="Reinecke F."/>
            <person name="Kusian B."/>
            <person name="Liesegang H."/>
            <person name="Cramm R."/>
            <person name="Eitinger T."/>
            <person name="Ewering C."/>
            <person name="Poetter M."/>
            <person name="Schwartz E."/>
            <person name="Strittmatter A."/>
            <person name="Voss I."/>
            <person name="Gottschalk G."/>
            <person name="Steinbuechel A."/>
            <person name="Friedrich B."/>
            <person name="Bowien B."/>
        </authorList>
    </citation>
    <scope>NUCLEOTIDE SEQUENCE [LARGE SCALE GENOMIC DNA]</scope>
    <source>
        <strain>ATCC 17699 / DSM 428 / KCTC 22496 / NCIMB 10442 / H16 / Stanier 337</strain>
    </source>
</reference>
<accession>Q0K635</accession>
<name>RL18_CUPNH</name>
<dbReference type="EMBL" id="AM260479">
    <property type="protein sequence ID" value="CAJ94536.1"/>
    <property type="molecule type" value="Genomic_DNA"/>
</dbReference>
<dbReference type="SMR" id="Q0K635"/>
<dbReference type="STRING" id="381666.H16_A3468"/>
<dbReference type="KEGG" id="reh:H16_A3468"/>
<dbReference type="eggNOG" id="COG0256">
    <property type="taxonomic scope" value="Bacteria"/>
</dbReference>
<dbReference type="HOGENOM" id="CLU_098841_0_1_4"/>
<dbReference type="Proteomes" id="UP000008210">
    <property type="component" value="Chromosome 1"/>
</dbReference>
<dbReference type="GO" id="GO:0022625">
    <property type="term" value="C:cytosolic large ribosomal subunit"/>
    <property type="evidence" value="ECO:0007669"/>
    <property type="project" value="TreeGrafter"/>
</dbReference>
<dbReference type="GO" id="GO:0008097">
    <property type="term" value="F:5S rRNA binding"/>
    <property type="evidence" value="ECO:0007669"/>
    <property type="project" value="TreeGrafter"/>
</dbReference>
<dbReference type="GO" id="GO:0003735">
    <property type="term" value="F:structural constituent of ribosome"/>
    <property type="evidence" value="ECO:0007669"/>
    <property type="project" value="InterPro"/>
</dbReference>
<dbReference type="GO" id="GO:0006412">
    <property type="term" value="P:translation"/>
    <property type="evidence" value="ECO:0007669"/>
    <property type="project" value="UniProtKB-UniRule"/>
</dbReference>
<dbReference type="CDD" id="cd00432">
    <property type="entry name" value="Ribosomal_L18_L5e"/>
    <property type="match status" value="1"/>
</dbReference>
<dbReference type="FunFam" id="3.30.420.100:FF:000001">
    <property type="entry name" value="50S ribosomal protein L18"/>
    <property type="match status" value="1"/>
</dbReference>
<dbReference type="Gene3D" id="3.30.420.100">
    <property type="match status" value="1"/>
</dbReference>
<dbReference type="HAMAP" id="MF_01337_B">
    <property type="entry name" value="Ribosomal_uL18_B"/>
    <property type="match status" value="1"/>
</dbReference>
<dbReference type="InterPro" id="IPR004389">
    <property type="entry name" value="Ribosomal_uL18_bac-type"/>
</dbReference>
<dbReference type="InterPro" id="IPR005484">
    <property type="entry name" value="Ribosomal_uL18_bac/euk"/>
</dbReference>
<dbReference type="NCBIfam" id="TIGR00060">
    <property type="entry name" value="L18_bact"/>
    <property type="match status" value="1"/>
</dbReference>
<dbReference type="PANTHER" id="PTHR12899">
    <property type="entry name" value="39S RIBOSOMAL PROTEIN L18, MITOCHONDRIAL"/>
    <property type="match status" value="1"/>
</dbReference>
<dbReference type="PANTHER" id="PTHR12899:SF3">
    <property type="entry name" value="LARGE RIBOSOMAL SUBUNIT PROTEIN UL18M"/>
    <property type="match status" value="1"/>
</dbReference>
<dbReference type="Pfam" id="PF00861">
    <property type="entry name" value="Ribosomal_L18p"/>
    <property type="match status" value="1"/>
</dbReference>
<dbReference type="SUPFAM" id="SSF53137">
    <property type="entry name" value="Translational machinery components"/>
    <property type="match status" value="1"/>
</dbReference>
<protein>
    <recommendedName>
        <fullName evidence="1">Large ribosomal subunit protein uL18</fullName>
    </recommendedName>
    <alternativeName>
        <fullName evidence="2">50S ribosomal protein L18</fullName>
    </alternativeName>
</protein>